<organism>
    <name type="scientific">Prochlorococcus marinus (strain NATL1A)</name>
    <dbReference type="NCBI Taxonomy" id="167555"/>
    <lineage>
        <taxon>Bacteria</taxon>
        <taxon>Bacillati</taxon>
        <taxon>Cyanobacteriota</taxon>
        <taxon>Cyanophyceae</taxon>
        <taxon>Synechococcales</taxon>
        <taxon>Prochlorococcaceae</taxon>
        <taxon>Prochlorococcus</taxon>
    </lineage>
</organism>
<gene>
    <name type="ordered locus">NATL1_00191</name>
</gene>
<proteinExistence type="inferred from homology"/>
<accession>A2BZC3</accession>
<comment type="function">
    <text evidence="1">Binds to DNA and alters its conformation. May be involved in regulation of gene expression, nucleoid organization and DNA protection.</text>
</comment>
<comment type="subunit">
    <text evidence="1">Homodimer.</text>
</comment>
<comment type="subcellular location">
    <subcellularLocation>
        <location evidence="1">Cytoplasm</location>
        <location evidence="1">Nucleoid</location>
    </subcellularLocation>
</comment>
<comment type="similarity">
    <text evidence="1">Belongs to the YbaB/EbfC family.</text>
</comment>
<evidence type="ECO:0000255" key="1">
    <source>
        <dbReference type="HAMAP-Rule" id="MF_00274"/>
    </source>
</evidence>
<evidence type="ECO:0000256" key="2">
    <source>
        <dbReference type="SAM" id="MobiDB-lite"/>
    </source>
</evidence>
<dbReference type="EMBL" id="CP000553">
    <property type="protein sequence ID" value="ABM74583.1"/>
    <property type="molecule type" value="Genomic_DNA"/>
</dbReference>
<dbReference type="RefSeq" id="WP_011822821.1">
    <property type="nucleotide sequence ID" value="NC_008819.1"/>
</dbReference>
<dbReference type="SMR" id="A2BZC3"/>
<dbReference type="KEGG" id="pme:NATL1_00191"/>
<dbReference type="eggNOG" id="COG0718">
    <property type="taxonomic scope" value="Bacteria"/>
</dbReference>
<dbReference type="HOGENOM" id="CLU_140930_0_1_3"/>
<dbReference type="Proteomes" id="UP000002592">
    <property type="component" value="Chromosome"/>
</dbReference>
<dbReference type="GO" id="GO:0043590">
    <property type="term" value="C:bacterial nucleoid"/>
    <property type="evidence" value="ECO:0007669"/>
    <property type="project" value="UniProtKB-UniRule"/>
</dbReference>
<dbReference type="GO" id="GO:0005829">
    <property type="term" value="C:cytosol"/>
    <property type="evidence" value="ECO:0007669"/>
    <property type="project" value="TreeGrafter"/>
</dbReference>
<dbReference type="GO" id="GO:0003677">
    <property type="term" value="F:DNA binding"/>
    <property type="evidence" value="ECO:0007669"/>
    <property type="project" value="UniProtKB-UniRule"/>
</dbReference>
<dbReference type="Gene3D" id="3.30.1310.10">
    <property type="entry name" value="Nucleoid-associated protein YbaB-like domain"/>
    <property type="match status" value="1"/>
</dbReference>
<dbReference type="HAMAP" id="MF_00274">
    <property type="entry name" value="DNA_YbaB_EbfC"/>
    <property type="match status" value="1"/>
</dbReference>
<dbReference type="InterPro" id="IPR036894">
    <property type="entry name" value="YbaB-like_sf"/>
</dbReference>
<dbReference type="InterPro" id="IPR004401">
    <property type="entry name" value="YbaB/EbfC"/>
</dbReference>
<dbReference type="NCBIfam" id="TIGR00103">
    <property type="entry name" value="DNA_YbaB_EbfC"/>
    <property type="match status" value="1"/>
</dbReference>
<dbReference type="PANTHER" id="PTHR33449">
    <property type="entry name" value="NUCLEOID-ASSOCIATED PROTEIN YBAB"/>
    <property type="match status" value="1"/>
</dbReference>
<dbReference type="PANTHER" id="PTHR33449:SF1">
    <property type="entry name" value="NUCLEOID-ASSOCIATED PROTEIN YBAB"/>
    <property type="match status" value="1"/>
</dbReference>
<dbReference type="Pfam" id="PF02575">
    <property type="entry name" value="YbaB_DNA_bd"/>
    <property type="match status" value="1"/>
</dbReference>
<dbReference type="PIRSF" id="PIRSF004555">
    <property type="entry name" value="UCP004555"/>
    <property type="match status" value="1"/>
</dbReference>
<dbReference type="SUPFAM" id="SSF82607">
    <property type="entry name" value="YbaB-like"/>
    <property type="match status" value="1"/>
</dbReference>
<reference key="1">
    <citation type="journal article" date="2007" name="PLoS Genet.">
        <title>Patterns and implications of gene gain and loss in the evolution of Prochlorococcus.</title>
        <authorList>
            <person name="Kettler G.C."/>
            <person name="Martiny A.C."/>
            <person name="Huang K."/>
            <person name="Zucker J."/>
            <person name="Coleman M.L."/>
            <person name="Rodrigue S."/>
            <person name="Chen F."/>
            <person name="Lapidus A."/>
            <person name="Ferriera S."/>
            <person name="Johnson J."/>
            <person name="Steglich C."/>
            <person name="Church G.M."/>
            <person name="Richardson P."/>
            <person name="Chisholm S.W."/>
        </authorList>
    </citation>
    <scope>NUCLEOTIDE SEQUENCE [LARGE SCALE GENOMIC DNA]</scope>
    <source>
        <strain>NATL1A</strain>
    </source>
</reference>
<feature type="chain" id="PRO_1000003793" description="Nucleoid-associated protein NATL1_00191">
    <location>
        <begin position="1"/>
        <end position="115"/>
    </location>
</feature>
<feature type="region of interest" description="Disordered" evidence="2">
    <location>
        <begin position="89"/>
        <end position="115"/>
    </location>
</feature>
<protein>
    <recommendedName>
        <fullName evidence="1">Nucleoid-associated protein NATL1_00191</fullName>
    </recommendedName>
</protein>
<name>Y019_PROM1</name>
<keyword id="KW-0963">Cytoplasm</keyword>
<keyword id="KW-0238">DNA-binding</keyword>
<sequence length="115" mass="12754">MAGFGLPNFGQLTEAFKKAQQIQQNAQKLQEELEVMEIEGTNDDNRAKIWMSGNQKPLRVEIDPSLLSEGKAIIEEAILEAMKSAHEVSTSTMKERMEDLTGGFKLNLPGMGEES</sequence>